<organism>
    <name type="scientific">Pelobacter propionicus (strain DSM 2379 / NBRC 103807 / OttBd1)</name>
    <dbReference type="NCBI Taxonomy" id="338966"/>
    <lineage>
        <taxon>Bacteria</taxon>
        <taxon>Pseudomonadati</taxon>
        <taxon>Thermodesulfobacteriota</taxon>
        <taxon>Desulfuromonadia</taxon>
        <taxon>Desulfuromonadales</taxon>
        <taxon>Desulfuromonadaceae</taxon>
        <taxon>Pelobacter</taxon>
    </lineage>
</organism>
<reference key="1">
    <citation type="submission" date="2006-10" db="EMBL/GenBank/DDBJ databases">
        <title>Complete sequence of chromosome of Pelobacter propionicus DSM 2379.</title>
        <authorList>
            <consortium name="US DOE Joint Genome Institute"/>
            <person name="Copeland A."/>
            <person name="Lucas S."/>
            <person name="Lapidus A."/>
            <person name="Barry K."/>
            <person name="Detter J.C."/>
            <person name="Glavina del Rio T."/>
            <person name="Hammon N."/>
            <person name="Israni S."/>
            <person name="Dalin E."/>
            <person name="Tice H."/>
            <person name="Pitluck S."/>
            <person name="Saunders E."/>
            <person name="Brettin T."/>
            <person name="Bruce D."/>
            <person name="Han C."/>
            <person name="Tapia R."/>
            <person name="Schmutz J."/>
            <person name="Larimer F."/>
            <person name="Land M."/>
            <person name="Hauser L."/>
            <person name="Kyrpides N."/>
            <person name="Kim E."/>
            <person name="Lovley D."/>
            <person name="Richardson P."/>
        </authorList>
    </citation>
    <scope>NUCLEOTIDE SEQUENCE [LARGE SCALE GENOMIC DNA]</scope>
    <source>
        <strain>DSM 2379 / NBRC 103807 / OttBd1</strain>
    </source>
</reference>
<sequence length="463" mass="49096">MATDLLYGLLPEHILLGLILVLMLLEILSVDKRAGSALFIASLLAGAGVLVMQLQTGYTADIVMNEIRIDRFSEIGRLIIVSCGAILGVYSLSSEAGHKYWILIASSLLGAMIILDSAGFISLFMGIEILSLPGFALMVLNNGKSTASEGSIKYLLLSSVATALVLFGLSLVYGSTGNLNISSFTAAVATGGVQNLAASVMILSGFFLKASVFPFHGWAPDAYSSARLPVTAFLASIVKAAVVLGLVRILGNAVLNPEAVTVIALLSMLSMFYGNITAIHQTAFKKMLAYSSISHAGYMMFALVDNTGARTEALLYYVAVYAVTTITACACFSILSGEDDNLDNLNGIFRKKPVAAILLSLCVLSLAGIPPLPGFLAKFFVFKTVIASGHLTVAVLAFVASYIGTFFYLGVVLRMFRSDAETVEQPANATCLCWTWGGALLGTLALALFMLLPNIFHWVMTGI</sequence>
<keyword id="KW-0997">Cell inner membrane</keyword>
<keyword id="KW-1003">Cell membrane</keyword>
<keyword id="KW-0472">Membrane</keyword>
<keyword id="KW-0520">NAD</keyword>
<keyword id="KW-0874">Quinone</keyword>
<keyword id="KW-1185">Reference proteome</keyword>
<keyword id="KW-1278">Translocase</keyword>
<keyword id="KW-0812">Transmembrane</keyword>
<keyword id="KW-1133">Transmembrane helix</keyword>
<keyword id="KW-0813">Transport</keyword>
<keyword id="KW-0830">Ubiquinone</keyword>
<accession>A1ALQ2</accession>
<evidence type="ECO:0000255" key="1">
    <source>
        <dbReference type="HAMAP-Rule" id="MF_00445"/>
    </source>
</evidence>
<proteinExistence type="inferred from homology"/>
<comment type="function">
    <text evidence="1">NDH-1 shuttles electrons from NADH, via FMN and iron-sulfur (Fe-S) centers, to quinones in the respiratory chain. The immediate electron acceptor for the enzyme in this species is believed to be ubiquinone. Couples the redox reaction to proton translocation (for every two electrons transferred, four hydrogen ions are translocated across the cytoplasmic membrane), and thus conserves the redox energy in a proton gradient.</text>
</comment>
<comment type="catalytic activity">
    <reaction evidence="1">
        <text>a quinone + NADH + 5 H(+)(in) = a quinol + NAD(+) + 4 H(+)(out)</text>
        <dbReference type="Rhea" id="RHEA:57888"/>
        <dbReference type="ChEBI" id="CHEBI:15378"/>
        <dbReference type="ChEBI" id="CHEBI:24646"/>
        <dbReference type="ChEBI" id="CHEBI:57540"/>
        <dbReference type="ChEBI" id="CHEBI:57945"/>
        <dbReference type="ChEBI" id="CHEBI:132124"/>
    </reaction>
</comment>
<comment type="subunit">
    <text evidence="1">NDH-1 is composed of 14 different subunits. Subunits NuoA, H, J, K, L, M, N constitute the membrane sector of the complex.</text>
</comment>
<comment type="subcellular location">
    <subcellularLocation>
        <location evidence="1">Cell inner membrane</location>
        <topology evidence="1">Multi-pass membrane protein</topology>
    </subcellularLocation>
</comment>
<comment type="similarity">
    <text evidence="1">Belongs to the complex I subunit 2 family.</text>
</comment>
<gene>
    <name evidence="1" type="primary">nuoN</name>
    <name type="ordered locus">Ppro_0641</name>
</gene>
<protein>
    <recommendedName>
        <fullName evidence="1">NADH-quinone oxidoreductase subunit N</fullName>
        <ecNumber evidence="1">7.1.1.-</ecNumber>
    </recommendedName>
    <alternativeName>
        <fullName evidence="1">NADH dehydrogenase I subunit N</fullName>
    </alternativeName>
    <alternativeName>
        <fullName evidence="1">NDH-1 subunit N</fullName>
    </alternativeName>
</protein>
<name>NUON_PELPD</name>
<feature type="chain" id="PRO_0000391201" description="NADH-quinone oxidoreductase subunit N">
    <location>
        <begin position="1"/>
        <end position="463"/>
    </location>
</feature>
<feature type="transmembrane region" description="Helical" evidence="1">
    <location>
        <begin position="5"/>
        <end position="25"/>
    </location>
</feature>
<feature type="transmembrane region" description="Helical" evidence="1">
    <location>
        <begin position="34"/>
        <end position="54"/>
    </location>
</feature>
<feature type="transmembrane region" description="Helical" evidence="1">
    <location>
        <begin position="72"/>
        <end position="92"/>
    </location>
</feature>
<feature type="transmembrane region" description="Helical" evidence="1">
    <location>
        <begin position="99"/>
        <end position="119"/>
    </location>
</feature>
<feature type="transmembrane region" description="Helical" evidence="1">
    <location>
        <begin position="120"/>
        <end position="140"/>
    </location>
</feature>
<feature type="transmembrane region" description="Helical" evidence="1">
    <location>
        <begin position="154"/>
        <end position="174"/>
    </location>
</feature>
<feature type="transmembrane region" description="Helical" evidence="1">
    <location>
        <begin position="196"/>
        <end position="216"/>
    </location>
</feature>
<feature type="transmembrane region" description="Helical" evidence="1">
    <location>
        <begin position="230"/>
        <end position="250"/>
    </location>
</feature>
<feature type="transmembrane region" description="Helical" evidence="1">
    <location>
        <begin position="259"/>
        <end position="279"/>
    </location>
</feature>
<feature type="transmembrane region" description="Helical" evidence="1">
    <location>
        <begin position="286"/>
        <end position="303"/>
    </location>
</feature>
<feature type="transmembrane region" description="Helical" evidence="1">
    <location>
        <begin position="314"/>
        <end position="334"/>
    </location>
</feature>
<feature type="transmembrane region" description="Helical" evidence="1">
    <location>
        <begin position="356"/>
        <end position="376"/>
    </location>
</feature>
<feature type="transmembrane region" description="Helical" evidence="1">
    <location>
        <begin position="393"/>
        <end position="413"/>
    </location>
</feature>
<feature type="transmembrane region" description="Helical" evidence="1">
    <location>
        <begin position="432"/>
        <end position="452"/>
    </location>
</feature>
<dbReference type="EC" id="7.1.1.-" evidence="1"/>
<dbReference type="EMBL" id="CP000482">
    <property type="protein sequence ID" value="ABK98272.1"/>
    <property type="molecule type" value="Genomic_DNA"/>
</dbReference>
<dbReference type="RefSeq" id="WP_011734585.1">
    <property type="nucleotide sequence ID" value="NC_008609.1"/>
</dbReference>
<dbReference type="SMR" id="A1ALQ2"/>
<dbReference type="STRING" id="338966.Ppro_0641"/>
<dbReference type="KEGG" id="ppd:Ppro_0641"/>
<dbReference type="eggNOG" id="COG1007">
    <property type="taxonomic scope" value="Bacteria"/>
</dbReference>
<dbReference type="HOGENOM" id="CLU_007100_1_1_7"/>
<dbReference type="OrthoDB" id="9805769at2"/>
<dbReference type="Proteomes" id="UP000006732">
    <property type="component" value="Chromosome"/>
</dbReference>
<dbReference type="GO" id="GO:0005886">
    <property type="term" value="C:plasma membrane"/>
    <property type="evidence" value="ECO:0007669"/>
    <property type="project" value="UniProtKB-SubCell"/>
</dbReference>
<dbReference type="GO" id="GO:0008137">
    <property type="term" value="F:NADH dehydrogenase (ubiquinone) activity"/>
    <property type="evidence" value="ECO:0007669"/>
    <property type="project" value="InterPro"/>
</dbReference>
<dbReference type="GO" id="GO:0050136">
    <property type="term" value="F:NADH:ubiquinone reductase (non-electrogenic) activity"/>
    <property type="evidence" value="ECO:0007669"/>
    <property type="project" value="UniProtKB-UniRule"/>
</dbReference>
<dbReference type="GO" id="GO:0048038">
    <property type="term" value="F:quinone binding"/>
    <property type="evidence" value="ECO:0007669"/>
    <property type="project" value="UniProtKB-KW"/>
</dbReference>
<dbReference type="GO" id="GO:0042773">
    <property type="term" value="P:ATP synthesis coupled electron transport"/>
    <property type="evidence" value="ECO:0007669"/>
    <property type="project" value="InterPro"/>
</dbReference>
<dbReference type="HAMAP" id="MF_00445">
    <property type="entry name" value="NDH1_NuoN_1"/>
    <property type="match status" value="1"/>
</dbReference>
<dbReference type="InterPro" id="IPR010096">
    <property type="entry name" value="NADH-Q_OxRdtase_suN/2"/>
</dbReference>
<dbReference type="InterPro" id="IPR001750">
    <property type="entry name" value="ND/Mrp_TM"/>
</dbReference>
<dbReference type="PANTHER" id="PTHR22773">
    <property type="entry name" value="NADH DEHYDROGENASE"/>
    <property type="match status" value="1"/>
</dbReference>
<dbReference type="Pfam" id="PF00361">
    <property type="entry name" value="Proton_antipo_M"/>
    <property type="match status" value="1"/>
</dbReference>